<protein>
    <recommendedName>
        <fullName evidence="1">Peptidyl-tRNA hydrolase</fullName>
        <shortName evidence="1">Pth</shortName>
        <ecNumber evidence="1">3.1.1.29</ecNumber>
    </recommendedName>
</protein>
<gene>
    <name evidence="1" type="primary">pth</name>
    <name type="ordered locus">LI0738</name>
</gene>
<feature type="chain" id="PRO_0000264053" description="Peptidyl-tRNA hydrolase">
    <location>
        <begin position="1"/>
        <end position="201"/>
    </location>
</feature>
<feature type="active site" description="Proton acceptor" evidence="1">
    <location>
        <position position="22"/>
    </location>
</feature>
<feature type="binding site" evidence="1">
    <location>
        <position position="17"/>
    </location>
    <ligand>
        <name>tRNA</name>
        <dbReference type="ChEBI" id="CHEBI:17843"/>
    </ligand>
</feature>
<feature type="binding site" evidence="1">
    <location>
        <position position="68"/>
    </location>
    <ligand>
        <name>tRNA</name>
        <dbReference type="ChEBI" id="CHEBI:17843"/>
    </ligand>
</feature>
<feature type="binding site" evidence="1">
    <location>
        <position position="70"/>
    </location>
    <ligand>
        <name>tRNA</name>
        <dbReference type="ChEBI" id="CHEBI:17843"/>
    </ligand>
</feature>
<feature type="binding site" evidence="1">
    <location>
        <position position="116"/>
    </location>
    <ligand>
        <name>tRNA</name>
        <dbReference type="ChEBI" id="CHEBI:17843"/>
    </ligand>
</feature>
<feature type="site" description="Discriminates between blocked and unblocked aminoacyl-tRNA" evidence="1">
    <location>
        <position position="12"/>
    </location>
</feature>
<feature type="site" description="Stabilizes the basic form of H active site to accept a proton" evidence="1">
    <location>
        <position position="95"/>
    </location>
</feature>
<comment type="function">
    <text evidence="1">Hydrolyzes ribosome-free peptidyl-tRNAs (with 1 or more amino acids incorporated), which drop off the ribosome during protein synthesis, or as a result of ribosome stalling.</text>
</comment>
<comment type="function">
    <text evidence="1">Catalyzes the release of premature peptidyl moieties from peptidyl-tRNA molecules trapped in stalled 50S ribosomal subunits, and thus maintains levels of free tRNAs and 50S ribosomes.</text>
</comment>
<comment type="catalytic activity">
    <reaction evidence="1">
        <text>an N-acyl-L-alpha-aminoacyl-tRNA + H2O = an N-acyl-L-amino acid + a tRNA + H(+)</text>
        <dbReference type="Rhea" id="RHEA:54448"/>
        <dbReference type="Rhea" id="RHEA-COMP:10123"/>
        <dbReference type="Rhea" id="RHEA-COMP:13883"/>
        <dbReference type="ChEBI" id="CHEBI:15377"/>
        <dbReference type="ChEBI" id="CHEBI:15378"/>
        <dbReference type="ChEBI" id="CHEBI:59874"/>
        <dbReference type="ChEBI" id="CHEBI:78442"/>
        <dbReference type="ChEBI" id="CHEBI:138191"/>
        <dbReference type="EC" id="3.1.1.29"/>
    </reaction>
</comment>
<comment type="subunit">
    <text evidence="1">Monomer.</text>
</comment>
<comment type="subcellular location">
    <subcellularLocation>
        <location evidence="1">Cytoplasm</location>
    </subcellularLocation>
</comment>
<comment type="similarity">
    <text evidence="1">Belongs to the PTH family.</text>
</comment>
<sequence>MSIKGIIAGLGNPGGQYEKTRHNIGFMVINKLITITSASKLSGKKFYCELWKTTTIIDNYLLAKPQTYMNLSGEAIHPLVEWYNITKDNLLVIHDELDLPIGKMKLQQGGGTAGHNGLKSIIHNLGTKDFYRLRIGIGRSPLPSENTVNWVLGHLSMKELTTLNNLFPTIFDALSFFIKDEKETAIRMINSFTLSETVNLS</sequence>
<proteinExistence type="inferred from homology"/>
<evidence type="ECO:0000255" key="1">
    <source>
        <dbReference type="HAMAP-Rule" id="MF_00083"/>
    </source>
</evidence>
<accession>Q1MQD5</accession>
<dbReference type="EC" id="3.1.1.29" evidence="1"/>
<dbReference type="EMBL" id="AM180252">
    <property type="protein sequence ID" value="CAJ54792.1"/>
    <property type="molecule type" value="Genomic_DNA"/>
</dbReference>
<dbReference type="RefSeq" id="WP_011526821.1">
    <property type="nucleotide sequence ID" value="NC_008011.1"/>
</dbReference>
<dbReference type="SMR" id="Q1MQD5"/>
<dbReference type="STRING" id="363253.LI0738"/>
<dbReference type="KEGG" id="lip:LI0738"/>
<dbReference type="eggNOG" id="COG0193">
    <property type="taxonomic scope" value="Bacteria"/>
</dbReference>
<dbReference type="HOGENOM" id="CLU_062456_3_1_7"/>
<dbReference type="OrthoDB" id="9800507at2"/>
<dbReference type="Proteomes" id="UP000002430">
    <property type="component" value="Chromosome"/>
</dbReference>
<dbReference type="GO" id="GO:0005737">
    <property type="term" value="C:cytoplasm"/>
    <property type="evidence" value="ECO:0007669"/>
    <property type="project" value="UniProtKB-SubCell"/>
</dbReference>
<dbReference type="GO" id="GO:0004045">
    <property type="term" value="F:peptidyl-tRNA hydrolase activity"/>
    <property type="evidence" value="ECO:0007669"/>
    <property type="project" value="UniProtKB-UniRule"/>
</dbReference>
<dbReference type="GO" id="GO:0000049">
    <property type="term" value="F:tRNA binding"/>
    <property type="evidence" value="ECO:0007669"/>
    <property type="project" value="UniProtKB-UniRule"/>
</dbReference>
<dbReference type="GO" id="GO:0006515">
    <property type="term" value="P:protein quality control for misfolded or incompletely synthesized proteins"/>
    <property type="evidence" value="ECO:0007669"/>
    <property type="project" value="UniProtKB-UniRule"/>
</dbReference>
<dbReference type="GO" id="GO:0072344">
    <property type="term" value="P:rescue of stalled ribosome"/>
    <property type="evidence" value="ECO:0007669"/>
    <property type="project" value="UniProtKB-UniRule"/>
</dbReference>
<dbReference type="CDD" id="cd00462">
    <property type="entry name" value="PTH"/>
    <property type="match status" value="1"/>
</dbReference>
<dbReference type="FunFam" id="3.40.50.1470:FF:000001">
    <property type="entry name" value="Peptidyl-tRNA hydrolase"/>
    <property type="match status" value="1"/>
</dbReference>
<dbReference type="Gene3D" id="3.40.50.1470">
    <property type="entry name" value="Peptidyl-tRNA hydrolase"/>
    <property type="match status" value="1"/>
</dbReference>
<dbReference type="HAMAP" id="MF_00083">
    <property type="entry name" value="Pept_tRNA_hydro_bact"/>
    <property type="match status" value="1"/>
</dbReference>
<dbReference type="InterPro" id="IPR001328">
    <property type="entry name" value="Pept_tRNA_hydro"/>
</dbReference>
<dbReference type="InterPro" id="IPR018171">
    <property type="entry name" value="Pept_tRNA_hydro_CS"/>
</dbReference>
<dbReference type="InterPro" id="IPR036416">
    <property type="entry name" value="Pept_tRNA_hydro_sf"/>
</dbReference>
<dbReference type="NCBIfam" id="TIGR00447">
    <property type="entry name" value="pth"/>
    <property type="match status" value="1"/>
</dbReference>
<dbReference type="PANTHER" id="PTHR17224">
    <property type="entry name" value="PEPTIDYL-TRNA HYDROLASE"/>
    <property type="match status" value="1"/>
</dbReference>
<dbReference type="PANTHER" id="PTHR17224:SF1">
    <property type="entry name" value="PEPTIDYL-TRNA HYDROLASE"/>
    <property type="match status" value="1"/>
</dbReference>
<dbReference type="Pfam" id="PF01195">
    <property type="entry name" value="Pept_tRNA_hydro"/>
    <property type="match status" value="1"/>
</dbReference>
<dbReference type="SUPFAM" id="SSF53178">
    <property type="entry name" value="Peptidyl-tRNA hydrolase-like"/>
    <property type="match status" value="1"/>
</dbReference>
<dbReference type="PROSITE" id="PS01195">
    <property type="entry name" value="PEPT_TRNA_HYDROL_1"/>
    <property type="match status" value="1"/>
</dbReference>
<dbReference type="PROSITE" id="PS01196">
    <property type="entry name" value="PEPT_TRNA_HYDROL_2"/>
    <property type="match status" value="1"/>
</dbReference>
<name>PTH_LAWIP</name>
<keyword id="KW-0963">Cytoplasm</keyword>
<keyword id="KW-0378">Hydrolase</keyword>
<keyword id="KW-1185">Reference proteome</keyword>
<keyword id="KW-0694">RNA-binding</keyword>
<keyword id="KW-0820">tRNA-binding</keyword>
<reference key="1">
    <citation type="submission" date="2005-11" db="EMBL/GenBank/DDBJ databases">
        <title>The complete genome sequence of Lawsonia intracellularis: the causative agent of proliferative enteropathy.</title>
        <authorList>
            <person name="Kaur K."/>
            <person name="Zhang Q."/>
            <person name="Beckler D."/>
            <person name="Munir S."/>
            <person name="Li L."/>
            <person name="Kinsley K."/>
            <person name="Herron L."/>
            <person name="Peterson A."/>
            <person name="May B."/>
            <person name="Singh S."/>
            <person name="Gebhart C."/>
            <person name="Kapur V."/>
        </authorList>
    </citation>
    <scope>NUCLEOTIDE SEQUENCE [LARGE SCALE GENOMIC DNA]</scope>
    <source>
        <strain>PHE/MN1-00</strain>
    </source>
</reference>
<organism>
    <name type="scientific">Lawsonia intracellularis (strain PHE/MN1-00)</name>
    <dbReference type="NCBI Taxonomy" id="363253"/>
    <lineage>
        <taxon>Bacteria</taxon>
        <taxon>Pseudomonadati</taxon>
        <taxon>Thermodesulfobacteriota</taxon>
        <taxon>Desulfovibrionia</taxon>
        <taxon>Desulfovibrionales</taxon>
        <taxon>Desulfovibrionaceae</taxon>
        <taxon>Lawsonia</taxon>
    </lineage>
</organism>